<evidence type="ECO:0000255" key="1">
    <source>
        <dbReference type="HAMAP-Rule" id="MF_01817"/>
    </source>
</evidence>
<evidence type="ECO:0000255" key="2">
    <source>
        <dbReference type="PROSITE-ProRule" id="PRU01246"/>
    </source>
</evidence>
<evidence type="ECO:0000255" key="3">
    <source>
        <dbReference type="PROSITE-ProRule" id="PRU01248"/>
    </source>
</evidence>
<reference key="1">
    <citation type="journal article" date="2005" name="Proc. Natl. Acad. Sci. U.S.A.">
        <title>Genome analysis of multiple pathogenic isolates of Streptococcus agalactiae: implications for the microbial 'pan-genome'.</title>
        <authorList>
            <person name="Tettelin H."/>
            <person name="Masignani V."/>
            <person name="Cieslewicz M.J."/>
            <person name="Donati C."/>
            <person name="Medini D."/>
            <person name="Ward N.L."/>
            <person name="Angiuoli S.V."/>
            <person name="Crabtree J."/>
            <person name="Jones A.L."/>
            <person name="Durkin A.S."/>
            <person name="DeBoy R.T."/>
            <person name="Davidsen T.M."/>
            <person name="Mora M."/>
            <person name="Scarselli M."/>
            <person name="Margarit y Ros I."/>
            <person name="Peterson J.D."/>
            <person name="Hauser C.R."/>
            <person name="Sundaram J.P."/>
            <person name="Nelson W.C."/>
            <person name="Madupu R."/>
            <person name="Brinkac L.M."/>
            <person name="Dodson R.J."/>
            <person name="Rosovitz M.J."/>
            <person name="Sullivan S.A."/>
            <person name="Daugherty S.C."/>
            <person name="Haft D.H."/>
            <person name="Selengut J."/>
            <person name="Gwinn M.L."/>
            <person name="Zhou L."/>
            <person name="Zafar N."/>
            <person name="Khouri H."/>
            <person name="Radune D."/>
            <person name="Dimitrov G."/>
            <person name="Watkins K."/>
            <person name="O'Connor K.J."/>
            <person name="Smith S."/>
            <person name="Utterback T.R."/>
            <person name="White O."/>
            <person name="Rubens C.E."/>
            <person name="Grandi G."/>
            <person name="Madoff L.C."/>
            <person name="Kasper D.L."/>
            <person name="Telford J.L."/>
            <person name="Wessels M.R."/>
            <person name="Rappuoli R."/>
            <person name="Fraser C.M."/>
        </authorList>
    </citation>
    <scope>NUCLEOTIDE SEQUENCE [LARGE SCALE GENOMIC DNA]</scope>
    <source>
        <strain>ATCC 27591 / A909 / CDC SS700</strain>
    </source>
</reference>
<comment type="function">
    <text evidence="1">Putative tyrosine recombinase. Not involved in the cutting and rejoining of the recombining DNA molecules on dif(SL) site.</text>
</comment>
<comment type="subcellular location">
    <subcellularLocation>
        <location evidence="1">Cytoplasm</location>
    </subcellularLocation>
</comment>
<comment type="similarity">
    <text evidence="1">Belongs to the 'phage' integrase family. XerD-like subfamily.</text>
</comment>
<sequence length="246" mass="28960">MINDINNFIESKKLSLNSRKSYHYDLKQFYKIIGGHVNSEKLALYQQSLSEFKLTARKRKLSAVNQFLFFLYNRGTLKEFYRLQETEKITLAQTKSQIMDLSNFYQDTDYPSGRLIALLILSLGLTPAEIANLKKADFDTTFNILSIEKSQMKRILKLPEDLLPFLLESLEEDGDLVFEHNGKPYSRQWFFNQLTDFLNEKNEQQLTAQLLREQFILKQKENGKTMTELSRLLGLKTPITLERYYR</sequence>
<organism>
    <name type="scientific">Streptococcus agalactiae serotype Ia (strain ATCC 27591 / A909 / CDC SS700)</name>
    <dbReference type="NCBI Taxonomy" id="205921"/>
    <lineage>
        <taxon>Bacteria</taxon>
        <taxon>Bacillati</taxon>
        <taxon>Bacillota</taxon>
        <taxon>Bacilli</taxon>
        <taxon>Lactobacillales</taxon>
        <taxon>Streptococcaceae</taxon>
        <taxon>Streptococcus</taxon>
    </lineage>
</organism>
<proteinExistence type="inferred from homology"/>
<accession>Q3JZT9</accession>
<dbReference type="EMBL" id="CP000114">
    <property type="protein sequence ID" value="ABA46114.1"/>
    <property type="molecule type" value="Genomic_DNA"/>
</dbReference>
<dbReference type="SMR" id="Q3JZT9"/>
<dbReference type="KEGG" id="sak:SAK_1611"/>
<dbReference type="HOGENOM" id="CLU_1128554_0_0_9"/>
<dbReference type="GO" id="GO:0005737">
    <property type="term" value="C:cytoplasm"/>
    <property type="evidence" value="ECO:0007669"/>
    <property type="project" value="UniProtKB-SubCell"/>
</dbReference>
<dbReference type="GO" id="GO:0003677">
    <property type="term" value="F:DNA binding"/>
    <property type="evidence" value="ECO:0007669"/>
    <property type="project" value="UniProtKB-KW"/>
</dbReference>
<dbReference type="GO" id="GO:0009037">
    <property type="term" value="F:tyrosine-based site-specific recombinase activity"/>
    <property type="evidence" value="ECO:0007669"/>
    <property type="project" value="UniProtKB-UniRule"/>
</dbReference>
<dbReference type="GO" id="GO:0006313">
    <property type="term" value="P:DNA transposition"/>
    <property type="evidence" value="ECO:0007669"/>
    <property type="project" value="UniProtKB-UniRule"/>
</dbReference>
<dbReference type="CDD" id="cd01190">
    <property type="entry name" value="INT_StrepXerD_C_like"/>
    <property type="match status" value="1"/>
</dbReference>
<dbReference type="Gene3D" id="1.10.150.130">
    <property type="match status" value="1"/>
</dbReference>
<dbReference type="Gene3D" id="1.10.443.10">
    <property type="entry name" value="Intergrase catalytic core"/>
    <property type="match status" value="1"/>
</dbReference>
<dbReference type="HAMAP" id="MF_01817">
    <property type="entry name" value="Recomb_XerD_like"/>
    <property type="match status" value="1"/>
</dbReference>
<dbReference type="InterPro" id="IPR044068">
    <property type="entry name" value="CB"/>
</dbReference>
<dbReference type="InterPro" id="IPR011010">
    <property type="entry name" value="DNA_brk_join_enz"/>
</dbReference>
<dbReference type="InterPro" id="IPR013762">
    <property type="entry name" value="Integrase-like_cat_sf"/>
</dbReference>
<dbReference type="InterPro" id="IPR002104">
    <property type="entry name" value="Integrase_catalytic"/>
</dbReference>
<dbReference type="InterPro" id="IPR010998">
    <property type="entry name" value="Integrase_recombinase_N"/>
</dbReference>
<dbReference type="InterPro" id="IPR020876">
    <property type="entry name" value="Tyrosine_recombinase_XerD-like"/>
</dbReference>
<dbReference type="NCBIfam" id="NF002685">
    <property type="entry name" value="PRK02436.1"/>
    <property type="match status" value="1"/>
</dbReference>
<dbReference type="Pfam" id="PF00589">
    <property type="entry name" value="Phage_integrase"/>
    <property type="match status" value="1"/>
</dbReference>
<dbReference type="SUPFAM" id="SSF56349">
    <property type="entry name" value="DNA breaking-rejoining enzymes"/>
    <property type="match status" value="1"/>
</dbReference>
<dbReference type="PROSITE" id="PS51900">
    <property type="entry name" value="CB"/>
    <property type="match status" value="1"/>
</dbReference>
<dbReference type="PROSITE" id="PS51898">
    <property type="entry name" value="TYR_RECOMBINASE"/>
    <property type="match status" value="1"/>
</dbReference>
<keyword id="KW-0963">Cytoplasm</keyword>
<keyword id="KW-0229">DNA integration</keyword>
<keyword id="KW-0233">DNA recombination</keyword>
<keyword id="KW-0238">DNA-binding</keyword>
<gene>
    <name type="ordered locus">SAK_1611</name>
</gene>
<name>XERDL_STRA1</name>
<protein>
    <recommendedName>
        <fullName evidence="1">Tyrosine recombinase XerD-like</fullName>
    </recommendedName>
</protein>
<feature type="chain" id="PRO_1000070254" description="Tyrosine recombinase XerD-like">
    <location>
        <begin position="1"/>
        <end position="246"/>
    </location>
</feature>
<feature type="domain" description="Core-binding (CB)" evidence="3">
    <location>
        <begin position="1"/>
        <end position="72"/>
    </location>
</feature>
<feature type="domain" description="Tyr recombinase" evidence="2">
    <location>
        <begin position="84"/>
        <end position="246"/>
    </location>
</feature>
<feature type="active site" evidence="2">
    <location>
        <position position="149"/>
    </location>
</feature>
<feature type="active site" evidence="2">
    <location>
        <position position="212"/>
    </location>
</feature>
<feature type="active site" description="O-(3'-phospho-DNA)-tyrosine intermediate" evidence="2">
    <location>
        <position position="244"/>
    </location>
</feature>